<organism>
    <name type="scientific">Coffea arabica</name>
    <name type="common">Arabian coffee</name>
    <dbReference type="NCBI Taxonomy" id="13443"/>
    <lineage>
        <taxon>Eukaryota</taxon>
        <taxon>Viridiplantae</taxon>
        <taxon>Streptophyta</taxon>
        <taxon>Embryophyta</taxon>
        <taxon>Tracheophyta</taxon>
        <taxon>Spermatophyta</taxon>
        <taxon>Magnoliopsida</taxon>
        <taxon>eudicotyledons</taxon>
        <taxon>Gunneridae</taxon>
        <taxon>Pentapetalae</taxon>
        <taxon>asterids</taxon>
        <taxon>lamiids</taxon>
        <taxon>Gentianales</taxon>
        <taxon>Rubiaceae</taxon>
        <taxon>Ixoroideae</taxon>
        <taxon>Gardenieae complex</taxon>
        <taxon>Bertiereae - Coffeeae clade</taxon>
        <taxon>Coffeeae</taxon>
        <taxon>Coffea</taxon>
    </lineage>
</organism>
<reference key="1">
    <citation type="journal article" date="2007" name="Plant Biotechnol. J.">
        <title>The complete nucleotide sequence of the coffee (Coffea arabica L.) chloroplast genome: organization and implications for biotechnology and phylogenetic relationships amongst angiosperms.</title>
        <authorList>
            <person name="Samson N."/>
            <person name="Bausher M.G."/>
            <person name="Lee S.-B."/>
            <person name="Jansen R.K."/>
            <person name="Daniell H."/>
        </authorList>
    </citation>
    <scope>NUCLEOTIDE SEQUENCE [LARGE SCALE GENOMIC DNA]</scope>
</reference>
<proteinExistence type="inferred from homology"/>
<gene>
    <name evidence="1" type="primary">psbC</name>
</gene>
<evidence type="ECO:0000255" key="1">
    <source>
        <dbReference type="HAMAP-Rule" id="MF_01496"/>
    </source>
</evidence>
<accession>A0A331</accession>
<name>PSBC_COFAR</name>
<comment type="function">
    <text evidence="1">One of the components of the core complex of photosystem II (PSII). It binds chlorophyll and helps catalyze the primary light-induced photochemical processes of PSII. PSII is a light-driven water:plastoquinone oxidoreductase, using light energy to abstract electrons from H(2)O, generating O(2) and a proton gradient subsequently used for ATP formation.</text>
</comment>
<comment type="cofactor">
    <text evidence="1">Binds multiple chlorophylls and provides some of the ligands for the Ca-4Mn-5O cluster of the oxygen-evolving complex. It may also provide a ligand for a Cl- that is required for oxygen evolution. PSII binds additional chlorophylls, carotenoids and specific lipids.</text>
</comment>
<comment type="subunit">
    <text evidence="1">PSII is composed of 1 copy each of membrane proteins PsbA, PsbB, PsbC, PsbD, PsbE, PsbF, PsbH, PsbI, PsbJ, PsbK, PsbL, PsbM, PsbT, PsbX, PsbY, PsbZ, Psb30/Ycf12, at least 3 peripheral proteins of the oxygen-evolving complex and a large number of cofactors. It forms dimeric complexes.</text>
</comment>
<comment type="subcellular location">
    <subcellularLocation>
        <location evidence="1">Plastid</location>
        <location evidence="1">Chloroplast thylakoid membrane</location>
        <topology evidence="1">Multi-pass membrane protein</topology>
    </subcellularLocation>
</comment>
<comment type="similarity">
    <text evidence="1">Belongs to the PsbB/PsbC family. PsbC subfamily.</text>
</comment>
<feature type="propeptide" id="PRO_0000431130" evidence="1">
    <location>
        <begin position="1"/>
        <end position="14"/>
    </location>
</feature>
<feature type="chain" id="PRO_0000361354" description="Photosystem II CP43 reaction center protein" evidence="1">
    <location>
        <begin position="15"/>
        <end position="473"/>
    </location>
</feature>
<feature type="transmembrane region" description="Helical" evidence="1">
    <location>
        <begin position="69"/>
        <end position="93"/>
    </location>
</feature>
<feature type="transmembrane region" description="Helical" evidence="1">
    <location>
        <begin position="134"/>
        <end position="155"/>
    </location>
</feature>
<feature type="transmembrane region" description="Helical" evidence="1">
    <location>
        <begin position="178"/>
        <end position="200"/>
    </location>
</feature>
<feature type="transmembrane region" description="Helical" evidence="1">
    <location>
        <begin position="255"/>
        <end position="275"/>
    </location>
</feature>
<feature type="transmembrane region" description="Helical" evidence="1">
    <location>
        <begin position="291"/>
        <end position="312"/>
    </location>
</feature>
<feature type="transmembrane region" description="Helical" evidence="1">
    <location>
        <begin position="447"/>
        <end position="471"/>
    </location>
</feature>
<feature type="binding site" evidence="1">
    <location>
        <position position="367"/>
    </location>
    <ligand>
        <name>[CaMn4O5] cluster</name>
        <dbReference type="ChEBI" id="CHEBI:189552"/>
    </ligand>
</feature>
<feature type="modified residue" description="N-acetylthreonine" evidence="1">
    <location>
        <position position="15"/>
    </location>
</feature>
<feature type="modified residue" description="Phosphothreonine" evidence="1">
    <location>
        <position position="15"/>
    </location>
</feature>
<protein>
    <recommendedName>
        <fullName evidence="1">Photosystem II CP43 reaction center protein</fullName>
    </recommendedName>
    <alternativeName>
        <fullName evidence="1">PSII 43 kDa protein</fullName>
    </alternativeName>
    <alternativeName>
        <fullName evidence="1">Protein CP-43</fullName>
    </alternativeName>
</protein>
<geneLocation type="chloroplast"/>
<dbReference type="EMBL" id="EF044213">
    <property type="protein sequence ID" value="ABJ89675.1"/>
    <property type="molecule type" value="Genomic_DNA"/>
</dbReference>
<dbReference type="RefSeq" id="YP_817478.1">
    <property type="nucleotide sequence ID" value="NC_008535.1"/>
</dbReference>
<dbReference type="SMR" id="A0A331"/>
<dbReference type="GeneID" id="4421869"/>
<dbReference type="OrthoDB" id="1926060at2759"/>
<dbReference type="Proteomes" id="UP000515148">
    <property type="component" value="Chloroplast Pltd"/>
</dbReference>
<dbReference type="GO" id="GO:0009535">
    <property type="term" value="C:chloroplast thylakoid membrane"/>
    <property type="evidence" value="ECO:0007669"/>
    <property type="project" value="UniProtKB-SubCell"/>
</dbReference>
<dbReference type="GO" id="GO:0009523">
    <property type="term" value="C:photosystem II"/>
    <property type="evidence" value="ECO:0007669"/>
    <property type="project" value="UniProtKB-KW"/>
</dbReference>
<dbReference type="GO" id="GO:0016168">
    <property type="term" value="F:chlorophyll binding"/>
    <property type="evidence" value="ECO:0007669"/>
    <property type="project" value="UniProtKB-UniRule"/>
</dbReference>
<dbReference type="GO" id="GO:0045156">
    <property type="term" value="F:electron transporter, transferring electrons within the cyclic electron transport pathway of photosynthesis activity"/>
    <property type="evidence" value="ECO:0007669"/>
    <property type="project" value="InterPro"/>
</dbReference>
<dbReference type="GO" id="GO:0046872">
    <property type="term" value="F:metal ion binding"/>
    <property type="evidence" value="ECO:0007669"/>
    <property type="project" value="UniProtKB-KW"/>
</dbReference>
<dbReference type="GO" id="GO:0009772">
    <property type="term" value="P:photosynthetic electron transport in photosystem II"/>
    <property type="evidence" value="ECO:0007669"/>
    <property type="project" value="InterPro"/>
</dbReference>
<dbReference type="FunFam" id="1.10.10.670:FF:000001">
    <property type="entry name" value="Photosystem II CP43 reaction center protein"/>
    <property type="match status" value="1"/>
</dbReference>
<dbReference type="Gene3D" id="1.10.10.670">
    <property type="entry name" value="photosystem ii from thermosynechococcus elongatus"/>
    <property type="match status" value="1"/>
</dbReference>
<dbReference type="HAMAP" id="MF_01496">
    <property type="entry name" value="PSII_PsbC_CP43"/>
    <property type="match status" value="1"/>
</dbReference>
<dbReference type="InterPro" id="IPR000932">
    <property type="entry name" value="PS_antenna-like"/>
</dbReference>
<dbReference type="InterPro" id="IPR036001">
    <property type="entry name" value="PS_II_antenna-like_sf"/>
</dbReference>
<dbReference type="InterPro" id="IPR005869">
    <property type="entry name" value="PSII_PsbC"/>
</dbReference>
<dbReference type="InterPro" id="IPR044900">
    <property type="entry name" value="PSII_PsbC_sf"/>
</dbReference>
<dbReference type="NCBIfam" id="TIGR01153">
    <property type="entry name" value="psbC"/>
    <property type="match status" value="1"/>
</dbReference>
<dbReference type="Pfam" id="PF00421">
    <property type="entry name" value="PSII"/>
    <property type="match status" value="1"/>
</dbReference>
<dbReference type="SUPFAM" id="SSF161077">
    <property type="entry name" value="Photosystem II antenna protein-like"/>
    <property type="match status" value="1"/>
</dbReference>
<keyword id="KW-0007">Acetylation</keyword>
<keyword id="KW-0148">Chlorophyll</keyword>
<keyword id="KW-0150">Chloroplast</keyword>
<keyword id="KW-0157">Chromophore</keyword>
<keyword id="KW-0464">Manganese</keyword>
<keyword id="KW-0472">Membrane</keyword>
<keyword id="KW-0479">Metal-binding</keyword>
<keyword id="KW-0597">Phosphoprotein</keyword>
<keyword id="KW-0602">Photosynthesis</keyword>
<keyword id="KW-0604">Photosystem II</keyword>
<keyword id="KW-0934">Plastid</keyword>
<keyword id="KW-1185">Reference proteome</keyword>
<keyword id="KW-0793">Thylakoid</keyword>
<keyword id="KW-0812">Transmembrane</keyword>
<keyword id="KW-1133">Transmembrane helix</keyword>
<sequence length="473" mass="51910">MKTLYSLRRFYHVETLFNGTLALAGRDQETTGFAWWAGNARLINLSGKLLGAHVAHAGLIVFWAGAMNLFEVAHFVPEKPMYEQGLILLPHLATLGWGVGPGGEVIDTFPYFVSGVLHLISSAVLGFGGIYHALLGPETLEESFPFFGYVWKDRNKMTTILGIHLILLGIGAFLLVFKALYFGGVYDTWAPGGGDVRKITNLTLSPGIIFGYLLKSPFGGEGWIVSVDDLEDIIGGHVWLGSICILGGIWHILTKPFAWARRALVWSGEAYLSYSLGALSIFGFTACCFVWFNNTVYPSEFYGPTGPEASQAQAFTFLVRDQRLGANVGSAQGPTGLGKYLMRSPTGEVIFGGETMRFWDLRAPWLEPLRGPNGLDLSRLKKDIQPWQERRSAEYMTHAPLGSLNSVGGVATEINAVNYVSPRSWLATSHFVLGFFFFVGHLWHAGRARAAAAGFEKGIDRDFEPVLSMTPLN</sequence>